<protein>
    <recommendedName>
        <fullName>Protein OPG035</fullName>
    </recommendedName>
    <alternativeName>
        <fullName>Protein N1</fullName>
    </alternativeName>
</protein>
<comment type="function">
    <text evidence="1">Bcl-2-like protein which contributes to virulence by preventing host NF-kappa-B activation in response to pro-inflammatory stimuli such as TNF-alpha or IL1B.</text>
</comment>
<comment type="interaction">
    <interactant intactId="EBI-7115640">
        <id>P17361</id>
    </interactant>
    <interactant intactId="EBI-7115640">
        <id>P17361</id>
        <label>OPG035</label>
    </interactant>
    <organismsDiffer>false</organismsDiffer>
    <experiments>2</experiments>
</comment>
<comment type="interaction">
    <interactant intactId="EBI-7115640">
        <id>P17361</id>
    </interactant>
    <interactant intactId="EBI-700771">
        <id>Q92934</id>
        <label>BAD</label>
    </interactant>
    <organismsDiffer>true</organismsDiffer>
    <experiments>2</experiments>
</comment>
<comment type="interaction">
    <interactant intactId="EBI-7115640">
        <id>P17361</id>
    </interactant>
    <interactant intactId="EBI-516580">
        <id>Q07812</id>
        <label>BAX</label>
    </interactant>
    <organismsDiffer>true</organismsDiffer>
    <experiments>3</experiments>
</comment>
<comment type="interaction">
    <interactant intactId="EBI-7115640">
        <id>P17361</id>
    </interactant>
    <interactant intactId="EBI-519672">
        <id>P55957</id>
        <label>BID</label>
    </interactant>
    <organismsDiffer>true</organismsDiffer>
    <experiments>2</experiments>
</comment>
<comment type="induction">
    <text evidence="2">Expressed in the early phase of the viral replicative cycle.</text>
</comment>
<comment type="similarity">
    <text evidence="3">Belongs to the poxviridae OPG035 family.</text>
</comment>
<sequence>MRTLLIRYILWRNDNDQTYYNDNFKKLMLLDELVDDGDVCTLIKNMRMTLSDGPLLDRLNQPVNNIEDAKRMIAISAKVARDIGERSEIRWEESFTILFRMIETYFDDLMIDLYGEK</sequence>
<proteinExistence type="evidence at protein level"/>
<dbReference type="EMBL" id="M22812">
    <property type="protein sequence ID" value="AAA69608.1"/>
    <property type="molecule type" value="Genomic_DNA"/>
</dbReference>
<dbReference type="EMBL" id="AY243312">
    <property type="protein sequence ID" value="AAO89307.1"/>
    <property type="molecule type" value="Genomic_DNA"/>
</dbReference>
<dbReference type="PIR" id="H33348">
    <property type="entry name" value="WZVZB8"/>
</dbReference>
<dbReference type="SMR" id="P17361"/>
<dbReference type="IntAct" id="P17361">
    <property type="interactions" value="4"/>
</dbReference>
<dbReference type="MINT" id="P17361"/>
<dbReference type="KEGG" id="vg:3707643"/>
<dbReference type="Proteomes" id="UP000000344">
    <property type="component" value="Genome"/>
</dbReference>
<dbReference type="GO" id="GO:0042802">
    <property type="term" value="F:identical protein binding"/>
    <property type="evidence" value="ECO:0000353"/>
    <property type="project" value="IntAct"/>
</dbReference>
<dbReference type="GO" id="GO:0052150">
    <property type="term" value="P:symbiont-mediated perturbation of host apoptosis"/>
    <property type="evidence" value="ECO:0007669"/>
    <property type="project" value="UniProtKB-KW"/>
</dbReference>
<dbReference type="GO" id="GO:0052031">
    <property type="term" value="P:symbiont-mediated perturbation of host defense response"/>
    <property type="evidence" value="ECO:0007669"/>
    <property type="project" value="InterPro"/>
</dbReference>
<dbReference type="GO" id="GO:0085034">
    <property type="term" value="P:symbiont-mediated suppression of host NF-kappaB cascade"/>
    <property type="evidence" value="ECO:0007669"/>
    <property type="project" value="UniProtKB-KW"/>
</dbReference>
<dbReference type="FunFam" id="1.10.437.20:FF:000001">
    <property type="entry name" value="N1L"/>
    <property type="match status" value="1"/>
</dbReference>
<dbReference type="Gene3D" id="1.10.437.20">
    <property type="entry name" value="dsDNA poxvirus"/>
    <property type="match status" value="1"/>
</dbReference>
<dbReference type="InterPro" id="IPR009353">
    <property type="entry name" value="Orthopox_N1"/>
</dbReference>
<dbReference type="InterPro" id="IPR022819">
    <property type="entry name" value="Poxvirus_Bcl-2-like"/>
</dbReference>
<dbReference type="InterPro" id="IPR043018">
    <property type="entry name" value="Poxvirus_sf"/>
</dbReference>
<dbReference type="Pfam" id="PF06227">
    <property type="entry name" value="Poxv_Bcl-2-like"/>
    <property type="match status" value="1"/>
</dbReference>
<dbReference type="PIRSF" id="PIRSF003784">
    <property type="entry name" value="VAC_N1L"/>
    <property type="match status" value="1"/>
</dbReference>
<name>PG035_VACCW</name>
<organismHost>
    <name type="scientific">Bos taurus</name>
    <name type="common">Bovine</name>
    <dbReference type="NCBI Taxonomy" id="9913"/>
</organismHost>
<evidence type="ECO:0000269" key="1">
    <source>
    </source>
</evidence>
<evidence type="ECO:0000269" key="2">
    <source>
    </source>
</evidence>
<evidence type="ECO:0000305" key="3"/>
<feature type="chain" id="PRO_0000099633" description="Protein OPG035">
    <location>
        <begin position="1"/>
        <end position="117"/>
    </location>
</feature>
<feature type="sequence conflict" description="In Ref. 2; AAO89307." evidence="3" ref="2">
    <original>N</original>
    <variation>D</variation>
    <location>
        <position position="23"/>
    </location>
</feature>
<reference key="1">
    <citation type="journal article" date="1988" name="Virology">
        <title>Analysis of a large cluster of nonessential genes deleted from a vaccinia virus terminal transposition mutant.</title>
        <authorList>
            <person name="Kotwal G.J."/>
            <person name="Moss B."/>
        </authorList>
    </citation>
    <scope>NUCLEOTIDE SEQUENCE [GENOMIC DNA]</scope>
</reference>
<reference key="2">
    <citation type="submission" date="2003-02" db="EMBL/GenBank/DDBJ databases">
        <title>Sequencing of the coding region of Vaccinia-WR to an average 9-fold redundancy and an error rate of 0.16/10kb.</title>
        <authorList>
            <person name="Esposito J.J."/>
            <person name="Frace A.M."/>
            <person name="Sammons S.A."/>
            <person name="Olsen-Rasmussen M."/>
            <person name="Osborne J."/>
            <person name="Wohlhueter R."/>
        </authorList>
    </citation>
    <scope>NUCLEOTIDE SEQUENCE [LARGE SCALE GENOMIC DNA]</scope>
</reference>
<reference key="3">
    <citation type="journal article" date="2011" name="PLoS Pathog.">
        <title>Inhibition of apoptosis and NF-kappaB activation by vaccinia protein N1 occur via distinct binding surfaces and make different contributions to virulence.</title>
        <authorList>
            <person name="Maluquer de Motes C."/>
            <person name="Cooray S."/>
            <person name="Ren H."/>
            <person name="Almeida G.M."/>
            <person name="McGourty K."/>
            <person name="Bahar M.W."/>
            <person name="Stuart D.I."/>
            <person name="Grimes J.M."/>
            <person name="Graham S.C."/>
            <person name="Smith G.L."/>
        </authorList>
    </citation>
    <scope>FUNCTION</scope>
</reference>
<reference key="4">
    <citation type="journal article" date="2015" name="J. Virol.">
        <title>Deciphering poxvirus gene expression by RNA sequencing and ribosome profiling.</title>
        <authorList>
            <person name="Yang Z."/>
            <person name="Cao S."/>
            <person name="Martens C.A."/>
            <person name="Porcella S.F."/>
            <person name="Xie Z."/>
            <person name="Ma M."/>
            <person name="Shen B."/>
            <person name="Moss B."/>
        </authorList>
    </citation>
    <scope>INDUCTION</scope>
</reference>
<keyword id="KW-0244">Early protein</keyword>
<keyword id="KW-0945">Host-virus interaction</keyword>
<keyword id="KW-1100">Inhibition of host NF-kappa-B by virus</keyword>
<keyword id="KW-1119">Modulation of host cell apoptosis by virus</keyword>
<keyword id="KW-1185">Reference proteome</keyword>
<keyword id="KW-0899">Viral immunoevasion</keyword>
<accession>P17361</accession>
<accession>Q76ZY1</accession>
<gene>
    <name type="primary">OPG035</name>
    <name type="synonym">N1L</name>
    <name type="ORF">VACWR028</name>
</gene>
<organism>
    <name type="scientific">Vaccinia virus (strain Western Reserve)</name>
    <name type="common">VACV</name>
    <name type="synonym">Vaccinia virus (strain WR)</name>
    <dbReference type="NCBI Taxonomy" id="10254"/>
    <lineage>
        <taxon>Viruses</taxon>
        <taxon>Varidnaviria</taxon>
        <taxon>Bamfordvirae</taxon>
        <taxon>Nucleocytoviricota</taxon>
        <taxon>Pokkesviricetes</taxon>
        <taxon>Chitovirales</taxon>
        <taxon>Poxviridae</taxon>
        <taxon>Chordopoxvirinae</taxon>
        <taxon>Orthopoxvirus</taxon>
        <taxon>Vaccinia virus</taxon>
    </lineage>
</organism>